<accession>O45946</accession>
<sequence>MGIDINHKHDRVARRTAPKSENPYLRLLSKLYAFLARRTGEKFNAIVLKRLRMSRRNRQPLSLAKLARAVQKAGNENKTVVTLSTVTDDARLYTVPKISVAALHVTEGARARILAAGGEIITLDQLALKSPKGENTVFLQGPRSAREAEKHFGPAPGVPHSHTKPYVRSKGRKFERARGRRASRAYKN</sequence>
<proteinExistence type="evidence at protein level"/>
<keyword id="KW-0002">3D-structure</keyword>
<keyword id="KW-0963">Cytoplasm</keyword>
<keyword id="KW-1185">Reference proteome</keyword>
<keyword id="KW-0687">Ribonucleoprotein</keyword>
<keyword id="KW-0689">Ribosomal protein</keyword>
<feature type="chain" id="PRO_0000291623" description="Large ribosomal subunit protein eL18">
    <location>
        <begin position="1"/>
        <end position="188"/>
    </location>
</feature>
<feature type="region of interest" description="Disordered" evidence="2">
    <location>
        <begin position="147"/>
        <end position="188"/>
    </location>
</feature>
<feature type="compositionally biased region" description="Basic residues" evidence="2">
    <location>
        <begin position="161"/>
        <end position="171"/>
    </location>
</feature>
<feature type="compositionally biased region" description="Basic residues" evidence="2">
    <location>
        <begin position="178"/>
        <end position="188"/>
    </location>
</feature>
<name>RL18_CAEEL</name>
<organism>
    <name type="scientific">Caenorhabditis elegans</name>
    <dbReference type="NCBI Taxonomy" id="6239"/>
    <lineage>
        <taxon>Eukaryota</taxon>
        <taxon>Metazoa</taxon>
        <taxon>Ecdysozoa</taxon>
        <taxon>Nematoda</taxon>
        <taxon>Chromadorea</taxon>
        <taxon>Rhabditida</taxon>
        <taxon>Rhabditina</taxon>
        <taxon>Rhabditomorpha</taxon>
        <taxon>Rhabditoidea</taxon>
        <taxon>Rhabditidae</taxon>
        <taxon>Peloderinae</taxon>
        <taxon>Caenorhabditis</taxon>
    </lineage>
</organism>
<gene>
    <name type="primary">rpl-18</name>
    <name type="ORF">Y45F10D.12</name>
</gene>
<reference key="1">
    <citation type="journal article" date="1998" name="Science">
        <title>Genome sequence of the nematode C. elegans: a platform for investigating biology.</title>
        <authorList>
            <consortium name="The C. elegans sequencing consortium"/>
        </authorList>
    </citation>
    <scope>NUCLEOTIDE SEQUENCE [LARGE SCALE GENOMIC DNA]</scope>
    <source>
        <strain>Bristol N2</strain>
    </source>
</reference>
<evidence type="ECO:0000250" key="1"/>
<evidence type="ECO:0000256" key="2">
    <source>
        <dbReference type="SAM" id="MobiDB-lite"/>
    </source>
</evidence>
<evidence type="ECO:0000305" key="3"/>
<dbReference type="EMBL" id="AL021492">
    <property type="protein sequence ID" value="CAA16387.1"/>
    <property type="molecule type" value="Genomic_DNA"/>
</dbReference>
<dbReference type="PIR" id="T26939">
    <property type="entry name" value="T26939"/>
</dbReference>
<dbReference type="RefSeq" id="NP_502655.1">
    <property type="nucleotide sequence ID" value="NM_070254.8"/>
</dbReference>
<dbReference type="PDB" id="9BH5">
    <property type="method" value="EM"/>
    <property type="resolution" value="2.63 A"/>
    <property type="chains" value="CQ=1-188"/>
</dbReference>
<dbReference type="PDB" id="9CAI">
    <property type="method" value="EM"/>
    <property type="resolution" value="2.59 A"/>
    <property type="chains" value="CQ=1-188"/>
</dbReference>
<dbReference type="PDBsum" id="9BH5"/>
<dbReference type="PDBsum" id="9CAI"/>
<dbReference type="EMDB" id="EMD-44533"/>
<dbReference type="EMDB" id="EMD-45392"/>
<dbReference type="SMR" id="O45946"/>
<dbReference type="BioGRID" id="43426">
    <property type="interactions" value="94"/>
</dbReference>
<dbReference type="DIP" id="DIP-25467N"/>
<dbReference type="FunCoup" id="O45946">
    <property type="interactions" value="1926"/>
</dbReference>
<dbReference type="STRING" id="6239.Y45F10D.12.2"/>
<dbReference type="PaxDb" id="6239-Y45F10D.12.3"/>
<dbReference type="PeptideAtlas" id="O45946"/>
<dbReference type="EnsemblMetazoa" id="Y45F10D.12.1">
    <property type="protein sequence ID" value="Y45F10D.12.1"/>
    <property type="gene ID" value="WBGene00004430"/>
</dbReference>
<dbReference type="GeneID" id="178342"/>
<dbReference type="KEGG" id="cel:CELE_Y45F10D.12"/>
<dbReference type="UCSC" id="Y45F10D.12.1">
    <property type="organism name" value="c. elegans"/>
</dbReference>
<dbReference type="AGR" id="WB:WBGene00004430"/>
<dbReference type="CTD" id="178342"/>
<dbReference type="WormBase" id="Y45F10D.12">
    <property type="protein sequence ID" value="CE16650"/>
    <property type="gene ID" value="WBGene00004430"/>
    <property type="gene designation" value="rpl-18"/>
</dbReference>
<dbReference type="eggNOG" id="KOG1714">
    <property type="taxonomic scope" value="Eukaryota"/>
</dbReference>
<dbReference type="GeneTree" id="ENSGT00390000012976"/>
<dbReference type="HOGENOM" id="CLU_080024_0_0_1"/>
<dbReference type="InParanoid" id="O45946"/>
<dbReference type="OMA" id="IDICHKN"/>
<dbReference type="OrthoDB" id="6353017at2759"/>
<dbReference type="PhylomeDB" id="O45946"/>
<dbReference type="Reactome" id="R-CEL-156827">
    <property type="pathway name" value="L13a-mediated translational silencing of Ceruloplasmin expression"/>
</dbReference>
<dbReference type="Reactome" id="R-CEL-1799339">
    <property type="pathway name" value="SRP-dependent cotranslational protein targeting to membrane"/>
</dbReference>
<dbReference type="Reactome" id="R-CEL-72689">
    <property type="pathway name" value="Formation of a pool of free 40S subunits"/>
</dbReference>
<dbReference type="Reactome" id="R-CEL-72706">
    <property type="pathway name" value="GTP hydrolysis and joining of the 60S ribosomal subunit"/>
</dbReference>
<dbReference type="Reactome" id="R-CEL-975956">
    <property type="pathway name" value="Nonsense Mediated Decay (NMD) independent of the Exon Junction Complex (EJC)"/>
</dbReference>
<dbReference type="Reactome" id="R-CEL-975957">
    <property type="pathway name" value="Nonsense Mediated Decay (NMD) enhanced by the Exon Junction Complex (EJC)"/>
</dbReference>
<dbReference type="PRO" id="PR:O45946"/>
<dbReference type="Proteomes" id="UP000001940">
    <property type="component" value="Chromosome IV"/>
</dbReference>
<dbReference type="Bgee" id="WBGene00004430">
    <property type="expression patterns" value="Expressed in germ line (C elegans) and 4 other cell types or tissues"/>
</dbReference>
<dbReference type="GO" id="GO:0022625">
    <property type="term" value="C:cytosolic large ribosomal subunit"/>
    <property type="evidence" value="ECO:0000318"/>
    <property type="project" value="GO_Central"/>
</dbReference>
<dbReference type="GO" id="GO:0003723">
    <property type="term" value="F:RNA binding"/>
    <property type="evidence" value="ECO:0000318"/>
    <property type="project" value="GO_Central"/>
</dbReference>
<dbReference type="GO" id="GO:0003735">
    <property type="term" value="F:structural constituent of ribosome"/>
    <property type="evidence" value="ECO:0000318"/>
    <property type="project" value="GO_Central"/>
</dbReference>
<dbReference type="GO" id="GO:0006412">
    <property type="term" value="P:translation"/>
    <property type="evidence" value="ECO:0007669"/>
    <property type="project" value="InterPro"/>
</dbReference>
<dbReference type="FunFam" id="3.100.10.10:FF:000001">
    <property type="entry name" value="60S ribosomal protein L18"/>
    <property type="match status" value="1"/>
</dbReference>
<dbReference type="Gene3D" id="3.100.10.10">
    <property type="match status" value="1"/>
</dbReference>
<dbReference type="InterPro" id="IPR000039">
    <property type="entry name" value="Ribosomal_eL18"/>
</dbReference>
<dbReference type="InterPro" id="IPR021131">
    <property type="entry name" value="Ribosomal_uL15/eL18"/>
</dbReference>
<dbReference type="InterPro" id="IPR036227">
    <property type="entry name" value="Ribosomal_uL15/eL18_sf"/>
</dbReference>
<dbReference type="PANTHER" id="PTHR10934">
    <property type="entry name" value="60S RIBOSOMAL PROTEIN L18"/>
    <property type="match status" value="1"/>
</dbReference>
<dbReference type="PANTHER" id="PTHR10934:SF2">
    <property type="entry name" value="LARGE RIBOSOMAL SUBUNIT PROTEIN EL18"/>
    <property type="match status" value="1"/>
</dbReference>
<dbReference type="Pfam" id="PF17135">
    <property type="entry name" value="Ribosomal_L18"/>
    <property type="match status" value="1"/>
</dbReference>
<dbReference type="SUPFAM" id="SSF52080">
    <property type="entry name" value="Ribosomal proteins L15p and L18e"/>
    <property type="match status" value="1"/>
</dbReference>
<comment type="subcellular location">
    <subcellularLocation>
        <location evidence="1">Cytoplasm</location>
    </subcellularLocation>
</comment>
<comment type="similarity">
    <text evidence="3">Belongs to the eukaryotic ribosomal protein eL18 family.</text>
</comment>
<protein>
    <recommendedName>
        <fullName evidence="3">Large ribosomal subunit protein eL18</fullName>
    </recommendedName>
    <alternativeName>
        <fullName>60S ribosomal protein L18</fullName>
    </alternativeName>
</protein>